<name>Y1310_CLOPE</name>
<evidence type="ECO:0000250" key="1"/>
<evidence type="ECO:0000250" key="2">
    <source>
        <dbReference type="UniProtKB" id="Q9X1H9"/>
    </source>
</evidence>
<evidence type="ECO:0000255" key="3">
    <source>
        <dbReference type="PROSITE-ProRule" id="PRU00815"/>
    </source>
</evidence>
<sequence>MDKIKIITDSTCDLSKEIIEKYDIDVMPMLINFGEESYLDGVEIKVDSMMERIEREDTLPTTAQIVPTRFIEKYKGYLEEGYKVISIHISSNMSGTYQSACLAKTELESDDIVVIDSRNVTVGLGLIILKAARLIESGITLEDLEKEILEYRNHIKSTIAFESLDNLVRGGRLSKGKALFVSALGIKLMLNVLDGEMNVQGKIRGTKKMVKAMIEQFDSIPKKEGEPIILVELENEDIYLPIKEYLENNNIEYLKLPLGCSVAIHSGPKVCALFYVEEY</sequence>
<keyword id="KW-0446">Lipid-binding</keyword>
<keyword id="KW-1185">Reference proteome</keyword>
<reference key="1">
    <citation type="journal article" date="2002" name="Proc. Natl. Acad. Sci. U.S.A.">
        <title>Complete genome sequence of Clostridium perfringens, an anaerobic flesh-eater.</title>
        <authorList>
            <person name="Shimizu T."/>
            <person name="Ohtani K."/>
            <person name="Hirakawa H."/>
            <person name="Ohshima K."/>
            <person name="Yamashita A."/>
            <person name="Shiba T."/>
            <person name="Ogasawara N."/>
            <person name="Hattori M."/>
            <person name="Kuhara S."/>
            <person name="Hayashi H."/>
        </authorList>
    </citation>
    <scope>NUCLEOTIDE SEQUENCE [LARGE SCALE GENOMIC DNA]</scope>
    <source>
        <strain>13 / Type A</strain>
    </source>
</reference>
<dbReference type="EMBL" id="BA000016">
    <property type="protein sequence ID" value="BAB81016.1"/>
    <property type="molecule type" value="Genomic_DNA"/>
</dbReference>
<dbReference type="RefSeq" id="WP_011010378.1">
    <property type="nucleotide sequence ID" value="NC_003366.1"/>
</dbReference>
<dbReference type="SMR" id="Q8XKT3"/>
<dbReference type="STRING" id="195102.gene:10490573"/>
<dbReference type="KEGG" id="cpe:CPE1310"/>
<dbReference type="HOGENOM" id="CLU_048251_0_1_9"/>
<dbReference type="Proteomes" id="UP000000818">
    <property type="component" value="Chromosome"/>
</dbReference>
<dbReference type="GO" id="GO:0008289">
    <property type="term" value="F:lipid binding"/>
    <property type="evidence" value="ECO:0007669"/>
    <property type="project" value="UniProtKB-KW"/>
</dbReference>
<dbReference type="Gene3D" id="3.30.1180.10">
    <property type="match status" value="1"/>
</dbReference>
<dbReference type="Gene3D" id="3.40.50.10170">
    <property type="match status" value="1"/>
</dbReference>
<dbReference type="InterPro" id="IPR003797">
    <property type="entry name" value="DegV"/>
</dbReference>
<dbReference type="InterPro" id="IPR043168">
    <property type="entry name" value="DegV_C"/>
</dbReference>
<dbReference type="InterPro" id="IPR050270">
    <property type="entry name" value="DegV_domain_contain"/>
</dbReference>
<dbReference type="NCBIfam" id="TIGR00762">
    <property type="entry name" value="DegV"/>
    <property type="match status" value="1"/>
</dbReference>
<dbReference type="PANTHER" id="PTHR33434">
    <property type="entry name" value="DEGV DOMAIN-CONTAINING PROTEIN DR_1986-RELATED"/>
    <property type="match status" value="1"/>
</dbReference>
<dbReference type="PANTHER" id="PTHR33434:SF2">
    <property type="entry name" value="FATTY ACID-BINDING PROTEIN TM_1468"/>
    <property type="match status" value="1"/>
</dbReference>
<dbReference type="Pfam" id="PF02645">
    <property type="entry name" value="DegV"/>
    <property type="match status" value="1"/>
</dbReference>
<dbReference type="SUPFAM" id="SSF82549">
    <property type="entry name" value="DAK1/DegV-like"/>
    <property type="match status" value="1"/>
</dbReference>
<dbReference type="PROSITE" id="PS51482">
    <property type="entry name" value="DEGV"/>
    <property type="match status" value="1"/>
</dbReference>
<gene>
    <name type="ordered locus">CPE1310</name>
</gene>
<protein>
    <recommendedName>
        <fullName>DegV domain-containing protein CPE1310</fullName>
    </recommendedName>
</protein>
<accession>Q8XKT3</accession>
<organism>
    <name type="scientific">Clostridium perfringens (strain 13 / Type A)</name>
    <dbReference type="NCBI Taxonomy" id="195102"/>
    <lineage>
        <taxon>Bacteria</taxon>
        <taxon>Bacillati</taxon>
        <taxon>Bacillota</taxon>
        <taxon>Clostridia</taxon>
        <taxon>Eubacteriales</taxon>
        <taxon>Clostridiaceae</taxon>
        <taxon>Clostridium</taxon>
    </lineage>
</organism>
<feature type="chain" id="PRO_0000209759" description="DegV domain-containing protein CPE1310">
    <location>
        <begin position="1"/>
        <end position="279"/>
    </location>
</feature>
<feature type="domain" description="DegV" evidence="3">
    <location>
        <begin position="4"/>
        <end position="277"/>
    </location>
</feature>
<feature type="binding site" evidence="2">
    <location>
        <position position="62"/>
    </location>
    <ligand>
        <name>hexadecanoate</name>
        <dbReference type="ChEBI" id="CHEBI:7896"/>
    </ligand>
</feature>
<feature type="binding site" evidence="2">
    <location>
        <position position="94"/>
    </location>
    <ligand>
        <name>hexadecanoate</name>
        <dbReference type="ChEBI" id="CHEBI:7896"/>
    </ligand>
</feature>
<proteinExistence type="inferred from homology"/>
<comment type="function">
    <text evidence="1">May bind long-chain fatty acids, such as palmitate, and may play a role in lipid transport or fatty acid metabolism.</text>
</comment>